<dbReference type="EMBL" id="AACB02000019">
    <property type="protein sequence ID" value="EDO79206.1"/>
    <property type="molecule type" value="Genomic_DNA"/>
</dbReference>
<dbReference type="EMBL" id="AACB03000001">
    <property type="protein sequence ID" value="KAE8305605.1"/>
    <property type="molecule type" value="Genomic_DNA"/>
</dbReference>
<dbReference type="RefSeq" id="XP_001706880.1">
    <property type="nucleotide sequence ID" value="XM_001706828.1"/>
</dbReference>
<dbReference type="STRING" id="184922.A8BIQ0"/>
<dbReference type="EnsemblProtists" id="EDO79206">
    <property type="protein sequence ID" value="EDO79206"/>
    <property type="gene ID" value="GL50803_16322"/>
</dbReference>
<dbReference type="GeneID" id="5699775"/>
<dbReference type="KEGG" id="gla:GL50803_0016322"/>
<dbReference type="VEuPathDB" id="GiardiaDB:GL50803_16322"/>
<dbReference type="HOGENOM" id="CLU_461137_0_0_1"/>
<dbReference type="InParanoid" id="A8BIQ0"/>
<dbReference type="OMA" id="SCMLLGN"/>
<dbReference type="Proteomes" id="UP000001548">
    <property type="component" value="Chromosome 5"/>
</dbReference>
<dbReference type="GO" id="GO:0097729">
    <property type="term" value="C:9+2 motile cilium"/>
    <property type="evidence" value="ECO:0000314"/>
    <property type="project" value="UniProtKB"/>
</dbReference>
<dbReference type="GO" id="GO:0005930">
    <property type="term" value="C:axoneme"/>
    <property type="evidence" value="ECO:0000314"/>
    <property type="project" value="UniProtKB"/>
</dbReference>
<dbReference type="GO" id="GO:0005929">
    <property type="term" value="C:cilium"/>
    <property type="evidence" value="ECO:0000314"/>
    <property type="project" value="UniProtKB"/>
</dbReference>
<dbReference type="GO" id="GO:0005509">
    <property type="term" value="F:calcium ion binding"/>
    <property type="evidence" value="ECO:0007669"/>
    <property type="project" value="InterPro"/>
</dbReference>
<dbReference type="Gene3D" id="2.10.25.10">
    <property type="entry name" value="Laminin"/>
    <property type="match status" value="2"/>
</dbReference>
<dbReference type="Gene3D" id="2.170.300.10">
    <property type="entry name" value="Tie2 ligand-binding domain superfamily"/>
    <property type="match status" value="1"/>
</dbReference>
<dbReference type="InterPro" id="IPR001881">
    <property type="entry name" value="EGF-like_Ca-bd_dom"/>
</dbReference>
<dbReference type="InterPro" id="IPR000742">
    <property type="entry name" value="EGF-like_dom"/>
</dbReference>
<dbReference type="InterPro" id="IPR013111">
    <property type="entry name" value="EGF_extracell"/>
</dbReference>
<dbReference type="InterPro" id="IPR051216">
    <property type="entry name" value="Teneurin"/>
</dbReference>
<dbReference type="PANTHER" id="PTHR11219">
    <property type="entry name" value="TENEURIN AND N-ACETYLGLUCOSAMINE-1-PHOSPHODIESTER ALPHA-N-ACETYLGLUCOSAMINIDASE"/>
    <property type="match status" value="1"/>
</dbReference>
<dbReference type="PANTHER" id="PTHR11219:SF69">
    <property type="entry name" value="TENEURIN-A"/>
    <property type="match status" value="1"/>
</dbReference>
<dbReference type="Pfam" id="PF07974">
    <property type="entry name" value="EGF_2"/>
    <property type="match status" value="2"/>
</dbReference>
<dbReference type="Pfam" id="PF23106">
    <property type="entry name" value="EGF_Teneurin"/>
    <property type="match status" value="1"/>
</dbReference>
<dbReference type="SMART" id="SM00181">
    <property type="entry name" value="EGF"/>
    <property type="match status" value="11"/>
</dbReference>
<dbReference type="SMART" id="SM00179">
    <property type="entry name" value="EGF_CA"/>
    <property type="match status" value="3"/>
</dbReference>
<dbReference type="SUPFAM" id="SSF57196">
    <property type="entry name" value="EGF/Laminin"/>
    <property type="match status" value="3"/>
</dbReference>
<dbReference type="PROSITE" id="PS00022">
    <property type="entry name" value="EGF_1"/>
    <property type="match status" value="4"/>
</dbReference>
<dbReference type="PROSITE" id="PS01186">
    <property type="entry name" value="EGF_2"/>
    <property type="match status" value="3"/>
</dbReference>
<dbReference type="PROSITE" id="PS50026">
    <property type="entry name" value="EGF_3"/>
    <property type="match status" value="6"/>
</dbReference>
<protein>
    <recommendedName>
        <fullName evidence="6">Neurogenic locus notch homolog protein</fullName>
    </recommendedName>
    <alternativeName>
        <fullName evidence="5">Neurogenic Notch protein</fullName>
    </alternativeName>
    <alternativeName>
        <fullName evidence="7">Neurogenic locus Notch protein</fullName>
    </alternativeName>
</protein>
<accession>A8BIQ0</accession>
<name>NOTCH_GIAIC</name>
<comment type="subunit">
    <text evidence="4">Interacts with EB1.</text>
</comment>
<comment type="subcellular location">
    <subcellularLocation>
        <location evidence="4">Cell projection</location>
        <location evidence="4">Cilium</location>
        <location evidence="4">Flagellum</location>
    </subcellularLocation>
    <subcellularLocation>
        <location evidence="4">Cytoplasm</location>
        <location evidence="4">Cytoskeleton</location>
        <location evidence="4">Flagellum axoneme</location>
    </subcellularLocation>
    <text evidence="4">Localizes mainly to all eight flagella of trophozoites. Localizes in the axoneme of the anterior flagella.</text>
</comment>
<comment type="similarity">
    <text evidence="6">Belongs to the NOTCH family.</text>
</comment>
<feature type="signal peptide" evidence="1">
    <location>
        <begin position="1"/>
        <end position="19"/>
    </location>
</feature>
<feature type="chain" id="PRO_5033692773" description="Neurogenic locus notch homolog protein" evidence="1">
    <location>
        <begin position="20"/>
        <end position="592"/>
    </location>
</feature>
<feature type="domain" description="EGF-like 1" evidence="2">
    <location>
        <begin position="64"/>
        <end position="104"/>
    </location>
</feature>
<feature type="domain" description="EGF-like 2" evidence="2">
    <location>
        <begin position="106"/>
        <end position="146"/>
    </location>
</feature>
<feature type="domain" description="EGF-like 3" evidence="2">
    <location>
        <begin position="267"/>
        <end position="307"/>
    </location>
</feature>
<feature type="domain" description="EGF-like 4" evidence="2">
    <location>
        <begin position="353"/>
        <end position="387"/>
    </location>
</feature>
<feature type="domain" description="EGF-like 5" evidence="2">
    <location>
        <begin position="453"/>
        <end position="488"/>
    </location>
</feature>
<feature type="domain" description="EGF-like 6" evidence="2">
    <location>
        <begin position="546"/>
        <end position="588"/>
    </location>
</feature>
<feature type="glycosylation site" description="N-linked (GlcNAc...) asparagine" evidence="3">
    <location>
        <position position="552"/>
    </location>
</feature>
<feature type="disulfide bond" evidence="2">
    <location>
        <begin position="68"/>
        <end position="82"/>
    </location>
</feature>
<feature type="disulfide bond" evidence="2">
    <location>
        <begin position="76"/>
        <end position="92"/>
    </location>
</feature>
<feature type="disulfide bond" evidence="2">
    <location>
        <begin position="110"/>
        <end position="123"/>
    </location>
</feature>
<feature type="disulfide bond" evidence="2">
    <location>
        <begin position="117"/>
        <end position="134"/>
    </location>
</feature>
<feature type="disulfide bond" evidence="2">
    <location>
        <begin position="136"/>
        <end position="145"/>
    </location>
</feature>
<feature type="disulfide bond" evidence="2">
    <location>
        <begin position="271"/>
        <end position="284"/>
    </location>
</feature>
<feature type="disulfide bond" evidence="2">
    <location>
        <begin position="278"/>
        <end position="293"/>
    </location>
</feature>
<feature type="disulfide bond" evidence="2">
    <location>
        <begin position="295"/>
        <end position="306"/>
    </location>
</feature>
<feature type="disulfide bond" evidence="2">
    <location>
        <begin position="362"/>
        <end position="375"/>
    </location>
</feature>
<feature type="disulfide bond" evidence="2">
    <location>
        <begin position="377"/>
        <end position="386"/>
    </location>
</feature>
<feature type="disulfide bond" evidence="2">
    <location>
        <begin position="457"/>
        <end position="471"/>
    </location>
</feature>
<feature type="disulfide bond" evidence="2">
    <location>
        <begin position="478"/>
        <end position="487"/>
    </location>
</feature>
<feature type="disulfide bond" evidence="2">
    <location>
        <begin position="550"/>
        <end position="565"/>
    </location>
</feature>
<feature type="disulfide bond" evidence="2">
    <location>
        <begin position="555"/>
        <end position="576"/>
    </location>
</feature>
<feature type="disulfide bond" evidence="2">
    <location>
        <begin position="578"/>
        <end position="587"/>
    </location>
</feature>
<evidence type="ECO:0000255" key="1"/>
<evidence type="ECO:0000255" key="2">
    <source>
        <dbReference type="PROSITE-ProRule" id="PRU00076"/>
    </source>
</evidence>
<evidence type="ECO:0000255" key="3">
    <source>
        <dbReference type="PROSITE-ProRule" id="PRU00498"/>
    </source>
</evidence>
<evidence type="ECO:0000269" key="4">
    <source>
    </source>
</evidence>
<evidence type="ECO:0000303" key="5">
    <source>
    </source>
</evidence>
<evidence type="ECO:0000305" key="6"/>
<evidence type="ECO:0000312" key="7">
    <source>
        <dbReference type="EMBL" id="EDO79206.1"/>
    </source>
</evidence>
<evidence type="ECO:0000312" key="8">
    <source>
        <dbReference type="EMBL" id="KAE8305605.1"/>
    </source>
</evidence>
<evidence type="ECO:0000312" key="9">
    <source>
        <dbReference type="Proteomes" id="UP000001548"/>
    </source>
</evidence>
<organism evidence="7">
    <name type="scientific">Giardia intestinalis (strain ATCC 50803 / WB clone C6)</name>
    <name type="common">Giardia lamblia</name>
    <dbReference type="NCBI Taxonomy" id="184922"/>
    <lineage>
        <taxon>Eukaryota</taxon>
        <taxon>Metamonada</taxon>
        <taxon>Diplomonadida</taxon>
        <taxon>Hexamitidae</taxon>
        <taxon>Giardiinae</taxon>
        <taxon>Giardia</taxon>
    </lineage>
</organism>
<gene>
    <name evidence="8" type="ORF">GL50803_0016322</name>
    <name evidence="7" type="ORF">GL50803_16322</name>
</gene>
<keyword id="KW-0966">Cell projection</keyword>
<keyword id="KW-0969">Cilium</keyword>
<keyword id="KW-0963">Cytoplasm</keyword>
<keyword id="KW-0206">Cytoskeleton</keyword>
<keyword id="KW-1015">Disulfide bond</keyword>
<keyword id="KW-0245">EGF-like domain</keyword>
<keyword id="KW-0282">Flagellum</keyword>
<keyword id="KW-0325">Glycoprotein</keyword>
<keyword id="KW-1185">Reference proteome</keyword>
<keyword id="KW-0677">Repeat</keyword>
<keyword id="KW-0732">Signal</keyword>
<reference evidence="7 9" key="1">
    <citation type="journal article" date="2007" name="Science">
        <title>Genomic minimalism in the early diverging intestinal parasite Giardia lamblia.</title>
        <authorList>
            <person name="Morrison H.G."/>
            <person name="McArthur A.G."/>
            <person name="Gillin F.D."/>
            <person name="Aley S.B."/>
            <person name="Adam R.D."/>
            <person name="Olsen G.J."/>
            <person name="Best A.A."/>
            <person name="Cande W.Z."/>
            <person name="Chen F."/>
            <person name="Cipriano M.J."/>
            <person name="Davids B.J."/>
            <person name="Dawson S.C."/>
            <person name="Elmendorf H.G."/>
            <person name="Hehl A.B."/>
            <person name="Holder M.E."/>
            <person name="Huse S.M."/>
            <person name="Kim U.U."/>
            <person name="Lasek-Nesselquist E."/>
            <person name="Manning G."/>
            <person name="Nigam A."/>
            <person name="Nixon J.E.J."/>
            <person name="Palm D."/>
            <person name="Passamaneck N.E."/>
            <person name="Prabhu A."/>
            <person name="Reich C.I."/>
            <person name="Reiner D.S."/>
            <person name="Samuelson J."/>
            <person name="Svard S.G."/>
            <person name="Sogin M.L."/>
        </authorList>
    </citation>
    <scope>NUCLEOTIDE SEQUENCE [LARGE SCALE GENOMIC DNA]</scope>
    <source>
        <strain evidence="9">ATCC 50803 / WB clone C6</strain>
    </source>
</reference>
<reference evidence="8" key="2">
    <citation type="submission" date="2019-07" db="EMBL/GenBank/DDBJ databases">
        <title>New Giardia intestinalis WB genome in near-complete chromosomes.</title>
        <authorList>
            <person name="Xu F."/>
            <person name="Jex A."/>
            <person name="Svard S.G."/>
        </authorList>
    </citation>
    <scope>NUCLEOTIDE SEQUENCE [LARGE SCALE GENOMIC DNA]</scope>
    <source>
        <strain evidence="8">ATCC 50803 / WB clone C6</strain>
    </source>
</reference>
<reference key="3">
    <citation type="journal article" date="2010" name="Parasitol. Res.">
        <title>Identification of end-binding 1 (EB1) interacting proteins in Giardia lamblia.</title>
        <authorList>
            <person name="Kang K."/>
            <person name="Kim J."/>
            <person name="Yong T.S."/>
            <person name="Park S.J."/>
        </authorList>
    </citation>
    <scope>INTERACTION WITH EB1</scope>
    <scope>SUBCELLULAR LOCATION</scope>
    <source>
        <strain evidence="5">ATCC 30957 / WB</strain>
    </source>
</reference>
<proteinExistence type="evidence at protein level"/>
<sequence>MIFVLTLVALCTAIHCPDGEVEVDGACYPSSCVFEDTVCNNHGTCTASVCRCDSGYSLGNQGCYPSICYLASDDVCNGHGKCVESEHGSYECSCDQGYINDYQVCVPEACYTEEGVCFGYGTCIQPTDGSAPYCRCYPANAGEKCTECSSEAVLIDGACVHKSCLTEFVPGETLVCNGLGRCMIMPFPNIHYVCSCYPYDGTFYNNTCIYNGCITEYNLYGITEVCSDRGICAGTRCVCDSGYNGPTCEYKVVDCEPGFVSAQETCYPEACISDESVCGGHGRCIWNNDGAACACNDGFVFYENTCIYASCIVNGIVCPHGTYDASMNPPRCICPTDYIGRNSVCYPSSCVTNSQTNPPQLCHSAGSCDFDTGVCSCNPTNSGPTCEECSSEATLIDGVCQPWSCIDERNPDALSVCSGKGTCIAYSGRDVFDVCYMCSCDSGYETVPGGICVPNSCVTASLIICSNRGTCTDGVCKCNEGYSGALCEWYQCPTGQTFVNNLCVHEECVTSYDDVAQTTSVCGGYGRCVEDDGSYKCSCRSDAKVIDGECVNESCITNSATNEVCSGHGKCNGYNCVCSVGYFGKHCNVKTL</sequence>